<proteinExistence type="inferred from homology"/>
<feature type="chain" id="PRO_1000075392" description="S-adenosylmethionine synthase">
    <location>
        <begin position="1"/>
        <end position="383"/>
    </location>
</feature>
<feature type="region of interest" description="Flexible loop" evidence="1">
    <location>
        <begin position="99"/>
        <end position="109"/>
    </location>
</feature>
<feature type="binding site" description="in other chain" evidence="1">
    <location>
        <position position="15"/>
    </location>
    <ligand>
        <name>ATP</name>
        <dbReference type="ChEBI" id="CHEBI:30616"/>
        <note>ligand shared between two neighboring subunits</note>
    </ligand>
</feature>
<feature type="binding site" evidence="1">
    <location>
        <position position="17"/>
    </location>
    <ligand>
        <name>Mg(2+)</name>
        <dbReference type="ChEBI" id="CHEBI:18420"/>
    </ligand>
</feature>
<feature type="binding site" evidence="1">
    <location>
        <position position="43"/>
    </location>
    <ligand>
        <name>K(+)</name>
        <dbReference type="ChEBI" id="CHEBI:29103"/>
    </ligand>
</feature>
<feature type="binding site" description="in other chain" evidence="1">
    <location>
        <position position="56"/>
    </location>
    <ligand>
        <name>L-methionine</name>
        <dbReference type="ChEBI" id="CHEBI:57844"/>
        <note>ligand shared between two neighboring subunits</note>
    </ligand>
</feature>
<feature type="binding site" description="in other chain" evidence="1">
    <location>
        <position position="99"/>
    </location>
    <ligand>
        <name>L-methionine</name>
        <dbReference type="ChEBI" id="CHEBI:57844"/>
        <note>ligand shared between two neighboring subunits</note>
    </ligand>
</feature>
<feature type="binding site" description="in other chain" evidence="1">
    <location>
        <begin position="164"/>
        <end position="166"/>
    </location>
    <ligand>
        <name>ATP</name>
        <dbReference type="ChEBI" id="CHEBI:30616"/>
        <note>ligand shared between two neighboring subunits</note>
    </ligand>
</feature>
<feature type="binding site" description="in other chain" evidence="1">
    <location>
        <begin position="230"/>
        <end position="231"/>
    </location>
    <ligand>
        <name>ATP</name>
        <dbReference type="ChEBI" id="CHEBI:30616"/>
        <note>ligand shared between two neighboring subunits</note>
    </ligand>
</feature>
<feature type="binding site" evidence="1">
    <location>
        <position position="239"/>
    </location>
    <ligand>
        <name>ATP</name>
        <dbReference type="ChEBI" id="CHEBI:30616"/>
        <note>ligand shared between two neighboring subunits</note>
    </ligand>
</feature>
<feature type="binding site" evidence="1">
    <location>
        <position position="239"/>
    </location>
    <ligand>
        <name>L-methionine</name>
        <dbReference type="ChEBI" id="CHEBI:57844"/>
        <note>ligand shared between two neighboring subunits</note>
    </ligand>
</feature>
<feature type="binding site" description="in other chain" evidence="1">
    <location>
        <begin position="245"/>
        <end position="246"/>
    </location>
    <ligand>
        <name>ATP</name>
        <dbReference type="ChEBI" id="CHEBI:30616"/>
        <note>ligand shared between two neighboring subunits</note>
    </ligand>
</feature>
<feature type="binding site" evidence="1">
    <location>
        <position position="262"/>
    </location>
    <ligand>
        <name>ATP</name>
        <dbReference type="ChEBI" id="CHEBI:30616"/>
        <note>ligand shared between two neighboring subunits</note>
    </ligand>
</feature>
<feature type="binding site" evidence="1">
    <location>
        <position position="266"/>
    </location>
    <ligand>
        <name>ATP</name>
        <dbReference type="ChEBI" id="CHEBI:30616"/>
        <note>ligand shared between two neighboring subunits</note>
    </ligand>
</feature>
<feature type="binding site" description="in other chain" evidence="1">
    <location>
        <position position="270"/>
    </location>
    <ligand>
        <name>L-methionine</name>
        <dbReference type="ChEBI" id="CHEBI:57844"/>
        <note>ligand shared between two neighboring subunits</note>
    </ligand>
</feature>
<accession>A9L1M6</accession>
<reference key="1">
    <citation type="submission" date="2007-11" db="EMBL/GenBank/DDBJ databases">
        <title>Complete sequence of chromosome of Shewanella baltica OS195.</title>
        <authorList>
            <consortium name="US DOE Joint Genome Institute"/>
            <person name="Copeland A."/>
            <person name="Lucas S."/>
            <person name="Lapidus A."/>
            <person name="Barry K."/>
            <person name="Glavina del Rio T."/>
            <person name="Dalin E."/>
            <person name="Tice H."/>
            <person name="Pitluck S."/>
            <person name="Chain P."/>
            <person name="Malfatti S."/>
            <person name="Shin M."/>
            <person name="Vergez L."/>
            <person name="Schmutz J."/>
            <person name="Larimer F."/>
            <person name="Land M."/>
            <person name="Hauser L."/>
            <person name="Kyrpides N."/>
            <person name="Kim E."/>
            <person name="Brettar I."/>
            <person name="Rodrigues J."/>
            <person name="Konstantinidis K."/>
            <person name="Klappenbach J."/>
            <person name="Hofle M."/>
            <person name="Tiedje J."/>
            <person name="Richardson P."/>
        </authorList>
    </citation>
    <scope>NUCLEOTIDE SEQUENCE [LARGE SCALE GENOMIC DNA]</scope>
    <source>
        <strain>OS195</strain>
    </source>
</reference>
<protein>
    <recommendedName>
        <fullName evidence="1">S-adenosylmethionine synthase</fullName>
        <shortName evidence="1">AdoMet synthase</shortName>
        <ecNumber evidence="1">2.5.1.6</ecNumber>
    </recommendedName>
    <alternativeName>
        <fullName evidence="1">MAT</fullName>
    </alternativeName>
    <alternativeName>
        <fullName evidence="1">Methionine adenosyltransferase</fullName>
    </alternativeName>
</protein>
<organism>
    <name type="scientific">Shewanella baltica (strain OS195)</name>
    <dbReference type="NCBI Taxonomy" id="399599"/>
    <lineage>
        <taxon>Bacteria</taxon>
        <taxon>Pseudomonadati</taxon>
        <taxon>Pseudomonadota</taxon>
        <taxon>Gammaproteobacteria</taxon>
        <taxon>Alteromonadales</taxon>
        <taxon>Shewanellaceae</taxon>
        <taxon>Shewanella</taxon>
    </lineage>
</organism>
<gene>
    <name evidence="1" type="primary">metK</name>
    <name type="ordered locus">Sbal195_3660</name>
</gene>
<dbReference type="EC" id="2.5.1.6" evidence="1"/>
<dbReference type="EMBL" id="CP000891">
    <property type="protein sequence ID" value="ABX50822.1"/>
    <property type="molecule type" value="Genomic_DNA"/>
</dbReference>
<dbReference type="RefSeq" id="WP_006080333.1">
    <property type="nucleotide sequence ID" value="NC_009997.1"/>
</dbReference>
<dbReference type="SMR" id="A9L1M6"/>
<dbReference type="GeneID" id="11774964"/>
<dbReference type="KEGG" id="sbn:Sbal195_3660"/>
<dbReference type="HOGENOM" id="CLU_041802_1_1_6"/>
<dbReference type="UniPathway" id="UPA00315">
    <property type="reaction ID" value="UER00080"/>
</dbReference>
<dbReference type="Proteomes" id="UP000000770">
    <property type="component" value="Chromosome"/>
</dbReference>
<dbReference type="GO" id="GO:0005737">
    <property type="term" value="C:cytoplasm"/>
    <property type="evidence" value="ECO:0007669"/>
    <property type="project" value="UniProtKB-SubCell"/>
</dbReference>
<dbReference type="GO" id="GO:0005524">
    <property type="term" value="F:ATP binding"/>
    <property type="evidence" value="ECO:0007669"/>
    <property type="project" value="UniProtKB-UniRule"/>
</dbReference>
<dbReference type="GO" id="GO:0000287">
    <property type="term" value="F:magnesium ion binding"/>
    <property type="evidence" value="ECO:0007669"/>
    <property type="project" value="UniProtKB-UniRule"/>
</dbReference>
<dbReference type="GO" id="GO:0004478">
    <property type="term" value="F:methionine adenosyltransferase activity"/>
    <property type="evidence" value="ECO:0007669"/>
    <property type="project" value="UniProtKB-UniRule"/>
</dbReference>
<dbReference type="GO" id="GO:0006730">
    <property type="term" value="P:one-carbon metabolic process"/>
    <property type="evidence" value="ECO:0007669"/>
    <property type="project" value="UniProtKB-KW"/>
</dbReference>
<dbReference type="GO" id="GO:0006556">
    <property type="term" value="P:S-adenosylmethionine biosynthetic process"/>
    <property type="evidence" value="ECO:0007669"/>
    <property type="project" value="UniProtKB-UniRule"/>
</dbReference>
<dbReference type="CDD" id="cd18079">
    <property type="entry name" value="S-AdoMet_synt"/>
    <property type="match status" value="1"/>
</dbReference>
<dbReference type="FunFam" id="3.30.300.10:FF:000001">
    <property type="entry name" value="S-adenosylmethionine synthase"/>
    <property type="match status" value="1"/>
</dbReference>
<dbReference type="FunFam" id="3.30.300.10:FF:000003">
    <property type="entry name" value="S-adenosylmethionine synthase"/>
    <property type="match status" value="1"/>
</dbReference>
<dbReference type="FunFam" id="3.30.300.10:FF:000004">
    <property type="entry name" value="S-adenosylmethionine synthase"/>
    <property type="match status" value="1"/>
</dbReference>
<dbReference type="Gene3D" id="3.30.300.10">
    <property type="match status" value="3"/>
</dbReference>
<dbReference type="HAMAP" id="MF_00086">
    <property type="entry name" value="S_AdoMet_synth1"/>
    <property type="match status" value="1"/>
</dbReference>
<dbReference type="InterPro" id="IPR022631">
    <property type="entry name" value="ADOMET_SYNTHASE_CS"/>
</dbReference>
<dbReference type="InterPro" id="IPR022630">
    <property type="entry name" value="S-AdoMet_synt_C"/>
</dbReference>
<dbReference type="InterPro" id="IPR022629">
    <property type="entry name" value="S-AdoMet_synt_central"/>
</dbReference>
<dbReference type="InterPro" id="IPR022628">
    <property type="entry name" value="S-AdoMet_synt_N"/>
</dbReference>
<dbReference type="InterPro" id="IPR002133">
    <property type="entry name" value="S-AdoMet_synthetase"/>
</dbReference>
<dbReference type="InterPro" id="IPR022636">
    <property type="entry name" value="S-AdoMet_synthetase_sfam"/>
</dbReference>
<dbReference type="NCBIfam" id="TIGR01034">
    <property type="entry name" value="metK"/>
    <property type="match status" value="1"/>
</dbReference>
<dbReference type="PANTHER" id="PTHR11964">
    <property type="entry name" value="S-ADENOSYLMETHIONINE SYNTHETASE"/>
    <property type="match status" value="1"/>
</dbReference>
<dbReference type="Pfam" id="PF02773">
    <property type="entry name" value="S-AdoMet_synt_C"/>
    <property type="match status" value="1"/>
</dbReference>
<dbReference type="Pfam" id="PF02772">
    <property type="entry name" value="S-AdoMet_synt_M"/>
    <property type="match status" value="1"/>
</dbReference>
<dbReference type="Pfam" id="PF00438">
    <property type="entry name" value="S-AdoMet_synt_N"/>
    <property type="match status" value="1"/>
</dbReference>
<dbReference type="PIRSF" id="PIRSF000497">
    <property type="entry name" value="MAT"/>
    <property type="match status" value="1"/>
</dbReference>
<dbReference type="SUPFAM" id="SSF55973">
    <property type="entry name" value="S-adenosylmethionine synthetase"/>
    <property type="match status" value="3"/>
</dbReference>
<dbReference type="PROSITE" id="PS00376">
    <property type="entry name" value="ADOMET_SYNTHASE_1"/>
    <property type="match status" value="1"/>
</dbReference>
<dbReference type="PROSITE" id="PS00377">
    <property type="entry name" value="ADOMET_SYNTHASE_2"/>
    <property type="match status" value="1"/>
</dbReference>
<keyword id="KW-0067">ATP-binding</keyword>
<keyword id="KW-0963">Cytoplasm</keyword>
<keyword id="KW-0460">Magnesium</keyword>
<keyword id="KW-0479">Metal-binding</keyword>
<keyword id="KW-0547">Nucleotide-binding</keyword>
<keyword id="KW-0554">One-carbon metabolism</keyword>
<keyword id="KW-0630">Potassium</keyword>
<keyword id="KW-0808">Transferase</keyword>
<sequence length="383" mass="41264">MAKHLFTSESVSEGHPDKIADQISDAVLDAILAQDPKARVACETYVKTGMVLVGGEVTTSAWVDIEEITRKTVREIGYTHSDMGFDADSCAVLNAIGKQSPDINQGVDRADPAEQGAGDQGLMFGYANNETDVLMPAPITYAHALVKRQSEVRKNGTLPWLRPDAKSQVTFAYDDGKIVGIDAVVLSTQHRDDVSQADLIEGVMETIIKPVLPAQWLNKDTKFFINPTGRFVIGGPVGDCGLTGRKIIVDTYGGMARHGGGAFSGKDPSKVDRSAAYAARYVAKNIVAAGLADRCEIQVSYAIGVAEPTSISIETFGTGKVSEDLLIKLVRQHFELRPYGLTAMLDLARPIYQATAAYGHFGRNEFPWEATDKAEALRADAGL</sequence>
<evidence type="ECO:0000255" key="1">
    <source>
        <dbReference type="HAMAP-Rule" id="MF_00086"/>
    </source>
</evidence>
<comment type="function">
    <text evidence="1">Catalyzes the formation of S-adenosylmethionine (AdoMet) from methionine and ATP. The overall synthetic reaction is composed of two sequential steps, AdoMet formation and the subsequent tripolyphosphate hydrolysis which occurs prior to release of AdoMet from the enzyme.</text>
</comment>
<comment type="catalytic activity">
    <reaction evidence="1">
        <text>L-methionine + ATP + H2O = S-adenosyl-L-methionine + phosphate + diphosphate</text>
        <dbReference type="Rhea" id="RHEA:21080"/>
        <dbReference type="ChEBI" id="CHEBI:15377"/>
        <dbReference type="ChEBI" id="CHEBI:30616"/>
        <dbReference type="ChEBI" id="CHEBI:33019"/>
        <dbReference type="ChEBI" id="CHEBI:43474"/>
        <dbReference type="ChEBI" id="CHEBI:57844"/>
        <dbReference type="ChEBI" id="CHEBI:59789"/>
        <dbReference type="EC" id="2.5.1.6"/>
    </reaction>
</comment>
<comment type="cofactor">
    <cofactor evidence="1">
        <name>Mg(2+)</name>
        <dbReference type="ChEBI" id="CHEBI:18420"/>
    </cofactor>
    <text evidence="1">Binds 2 divalent ions per subunit.</text>
</comment>
<comment type="cofactor">
    <cofactor evidence="1">
        <name>K(+)</name>
        <dbReference type="ChEBI" id="CHEBI:29103"/>
    </cofactor>
    <text evidence="1">Binds 1 potassium ion per subunit.</text>
</comment>
<comment type="pathway">
    <text evidence="1">Amino-acid biosynthesis; S-adenosyl-L-methionine biosynthesis; S-adenosyl-L-methionine from L-methionine: step 1/1.</text>
</comment>
<comment type="subunit">
    <text evidence="1">Homotetramer; dimer of dimers.</text>
</comment>
<comment type="subcellular location">
    <subcellularLocation>
        <location evidence="1">Cytoplasm</location>
    </subcellularLocation>
</comment>
<comment type="similarity">
    <text evidence="1">Belongs to the AdoMet synthase family.</text>
</comment>
<name>METK_SHEB9</name>